<sequence>MPFVKIDLFEGRSEEQKIELAREVTEVVSRVAKAPKEAIHVFINDMPEGTYYPHGEMKKKN</sequence>
<evidence type="ECO:0000250" key="1"/>
<evidence type="ECO:0000305" key="2"/>
<comment type="similarity">
    <text evidence="2">Belongs to the 4-oxalocrotonate tautomerase family.</text>
</comment>
<gene>
    <name type="ordered locus">stu1128</name>
</gene>
<reference key="1">
    <citation type="journal article" date="2004" name="Nat. Biotechnol.">
        <title>Complete sequence and comparative genome analysis of the dairy bacterium Streptococcus thermophilus.</title>
        <authorList>
            <person name="Bolotin A."/>
            <person name="Quinquis B."/>
            <person name="Renault P."/>
            <person name="Sorokin A."/>
            <person name="Ehrlich S.D."/>
            <person name="Kulakauskas S."/>
            <person name="Lapidus A."/>
            <person name="Goltsman E."/>
            <person name="Mazur M."/>
            <person name="Pusch G.D."/>
            <person name="Fonstein M."/>
            <person name="Overbeek R."/>
            <person name="Kyprides N."/>
            <person name="Purnelle B."/>
            <person name="Prozzi D."/>
            <person name="Ngui K."/>
            <person name="Masuy D."/>
            <person name="Hancy F."/>
            <person name="Burteau S."/>
            <person name="Boutry M."/>
            <person name="Delcour J."/>
            <person name="Goffeau A."/>
            <person name="Hols P."/>
        </authorList>
    </citation>
    <scope>NUCLEOTIDE SEQUENCE [LARGE SCALE GENOMIC DNA]</scope>
    <source>
        <strain>ATCC BAA-250 / LMG 18311</strain>
    </source>
</reference>
<keyword id="KW-0413">Isomerase</keyword>
<keyword id="KW-1185">Reference proteome</keyword>
<protein>
    <recommendedName>
        <fullName>Probable tautomerase stu1128</fullName>
        <ecNumber>5.3.2.-</ecNumber>
    </recommendedName>
</protein>
<name>Y1128_STRT2</name>
<feature type="initiator methionine" description="Removed" evidence="1">
    <location>
        <position position="1"/>
    </location>
</feature>
<feature type="chain" id="PRO_0000209560" description="Probable tautomerase stu1128">
    <location>
        <begin position="2"/>
        <end position="61"/>
    </location>
</feature>
<feature type="active site" description="Proton acceptor; via imino nitrogen" evidence="1">
    <location>
        <position position="2"/>
    </location>
</feature>
<organism>
    <name type="scientific">Streptococcus thermophilus (strain ATCC BAA-250 / LMG 18311)</name>
    <dbReference type="NCBI Taxonomy" id="264199"/>
    <lineage>
        <taxon>Bacteria</taxon>
        <taxon>Bacillati</taxon>
        <taxon>Bacillota</taxon>
        <taxon>Bacilli</taxon>
        <taxon>Lactobacillales</taxon>
        <taxon>Streptococcaceae</taxon>
        <taxon>Streptococcus</taxon>
    </lineage>
</organism>
<accession>Q5M474</accession>
<dbReference type="EC" id="5.3.2.-"/>
<dbReference type="EMBL" id="CP000023">
    <property type="protein sequence ID" value="AAV60767.1"/>
    <property type="molecule type" value="Genomic_DNA"/>
</dbReference>
<dbReference type="RefSeq" id="WP_002950885.1">
    <property type="nucleotide sequence ID" value="NC_006448.1"/>
</dbReference>
<dbReference type="SMR" id="Q5M474"/>
<dbReference type="STRING" id="264199.stu1128"/>
<dbReference type="KEGG" id="stl:stu1128"/>
<dbReference type="eggNOG" id="COG1942">
    <property type="taxonomic scope" value="Bacteria"/>
</dbReference>
<dbReference type="HOGENOM" id="CLU_148073_5_1_9"/>
<dbReference type="Proteomes" id="UP000001170">
    <property type="component" value="Chromosome"/>
</dbReference>
<dbReference type="GO" id="GO:0016853">
    <property type="term" value="F:isomerase activity"/>
    <property type="evidence" value="ECO:0007669"/>
    <property type="project" value="UniProtKB-KW"/>
</dbReference>
<dbReference type="Gene3D" id="3.30.429.10">
    <property type="entry name" value="Macrophage Migration Inhibitory Factor"/>
    <property type="match status" value="1"/>
</dbReference>
<dbReference type="InterPro" id="IPR004370">
    <property type="entry name" value="4-OT-like_dom"/>
</dbReference>
<dbReference type="InterPro" id="IPR014347">
    <property type="entry name" value="Tautomerase/MIF_sf"/>
</dbReference>
<dbReference type="NCBIfam" id="NF002571">
    <property type="entry name" value="PRK02220.1"/>
    <property type="match status" value="1"/>
</dbReference>
<dbReference type="NCBIfam" id="NF002622">
    <property type="entry name" value="PRK02289.1"/>
    <property type="match status" value="1"/>
</dbReference>
<dbReference type="PANTHER" id="PTHR35530:SF1">
    <property type="entry name" value="2-HYDROXYMUCONATE TAUTOMERASE"/>
    <property type="match status" value="1"/>
</dbReference>
<dbReference type="PANTHER" id="PTHR35530">
    <property type="entry name" value="TAUTOMERASE-RELATED"/>
    <property type="match status" value="1"/>
</dbReference>
<dbReference type="Pfam" id="PF01361">
    <property type="entry name" value="Tautomerase"/>
    <property type="match status" value="1"/>
</dbReference>
<dbReference type="SUPFAM" id="SSF55331">
    <property type="entry name" value="Tautomerase/MIF"/>
    <property type="match status" value="1"/>
</dbReference>
<proteinExistence type="inferred from homology"/>